<dbReference type="PIR" id="JC5058">
    <property type="entry name" value="JC5058"/>
</dbReference>
<dbReference type="PDB" id="1JWI">
    <property type="method" value="X-ray"/>
    <property type="resolution" value="2.00 A"/>
    <property type="chains" value="A=1-131"/>
</dbReference>
<dbReference type="PDB" id="1UEX">
    <property type="method" value="X-ray"/>
    <property type="resolution" value="2.85 A"/>
    <property type="chains" value="A=1-131"/>
</dbReference>
<dbReference type="PDBsum" id="1JWI"/>
<dbReference type="PDBsum" id="1UEX"/>
<dbReference type="SMR" id="Q7LZK5"/>
<dbReference type="EvolutionaryTrace" id="Q7LZK5"/>
<dbReference type="GO" id="GO:0005576">
    <property type="term" value="C:extracellular region"/>
    <property type="evidence" value="ECO:0007669"/>
    <property type="project" value="UniProtKB-SubCell"/>
</dbReference>
<dbReference type="GO" id="GO:0090729">
    <property type="term" value="F:toxin activity"/>
    <property type="evidence" value="ECO:0007669"/>
    <property type="project" value="UniProtKB-KW"/>
</dbReference>
<dbReference type="FunFam" id="3.10.100.10:FF:000087">
    <property type="entry name" value="Snaclec rhodocetin subunit delta"/>
    <property type="match status" value="1"/>
</dbReference>
<dbReference type="Gene3D" id="3.10.100.10">
    <property type="entry name" value="Mannose-Binding Protein A, subunit A"/>
    <property type="match status" value="1"/>
</dbReference>
<dbReference type="InterPro" id="IPR001304">
    <property type="entry name" value="C-type_lectin-like"/>
</dbReference>
<dbReference type="InterPro" id="IPR016186">
    <property type="entry name" value="C-type_lectin-like/link_sf"/>
</dbReference>
<dbReference type="InterPro" id="IPR050111">
    <property type="entry name" value="C-type_lectin/snaclec_domain"/>
</dbReference>
<dbReference type="InterPro" id="IPR016187">
    <property type="entry name" value="CTDL_fold"/>
</dbReference>
<dbReference type="PANTHER" id="PTHR22803">
    <property type="entry name" value="MANNOSE, PHOSPHOLIPASE, LECTIN RECEPTOR RELATED"/>
    <property type="match status" value="1"/>
</dbReference>
<dbReference type="Pfam" id="PF00059">
    <property type="entry name" value="Lectin_C"/>
    <property type="match status" value="1"/>
</dbReference>
<dbReference type="SMART" id="SM00034">
    <property type="entry name" value="CLECT"/>
    <property type="match status" value="1"/>
</dbReference>
<dbReference type="SUPFAM" id="SSF56436">
    <property type="entry name" value="C-type lectin-like"/>
    <property type="match status" value="1"/>
</dbReference>
<dbReference type="PROSITE" id="PS50041">
    <property type="entry name" value="C_TYPE_LECTIN_2"/>
    <property type="match status" value="1"/>
</dbReference>
<comment type="function">
    <text evidence="3 5">Snaclec that binds to von Willebrand factor (VWF) and induces its interaction with GPIbalpha (GP1BA) (via the vWF A1 domain), resulting in platelet aggregation.</text>
</comment>
<comment type="subunit">
    <text evidence="2 4">Heterodimer of subunits alpha and beta; disulfide-linked.</text>
</comment>
<comment type="subcellular location">
    <subcellularLocation>
        <location>Secreted</location>
    </subcellularLocation>
</comment>
<comment type="tissue specificity">
    <text>Expressed by the venom gland.</text>
</comment>
<comment type="similarity">
    <text evidence="6">Belongs to the snaclec family.</text>
</comment>
<evidence type="ECO:0000255" key="1">
    <source>
        <dbReference type="PROSITE-ProRule" id="PRU00040"/>
    </source>
</evidence>
<evidence type="ECO:0000269" key="2">
    <source>
    </source>
</evidence>
<evidence type="ECO:0000269" key="3">
    <source>
    </source>
</evidence>
<evidence type="ECO:0000269" key="4">
    <source>
    </source>
</evidence>
<evidence type="ECO:0000269" key="5">
    <source>
    </source>
</evidence>
<evidence type="ECO:0000305" key="6"/>
<evidence type="ECO:0007829" key="7">
    <source>
        <dbReference type="PDB" id="1JWI"/>
    </source>
</evidence>
<evidence type="ECO:0007829" key="8">
    <source>
        <dbReference type="PDB" id="1UEX"/>
    </source>
</evidence>
<proteinExistence type="evidence at protein level"/>
<protein>
    <recommendedName>
        <fullName>Snaclec bitiscetin subunit alpha</fullName>
    </recommendedName>
</protein>
<keyword id="KW-0002">3D-structure</keyword>
<keyword id="KW-0903">Direct protein sequencing</keyword>
<keyword id="KW-1015">Disulfide bond</keyword>
<keyword id="KW-1199">Hemostasis impairing toxin</keyword>
<keyword id="KW-1202">Platelet aggregation activating toxin</keyword>
<keyword id="KW-0964">Secreted</keyword>
<keyword id="KW-0800">Toxin</keyword>
<accession>Q7LZK5</accession>
<sequence>DPGCLPDWSSYKGHCYKVFKKVGTWEDAEKFCVENSGHLASIDSKEEADFVTKLASQTLTKFVYDAWIGLRDESKTQQCSPQWTDGSSVVYENVDEPTKCFGLDVHTEYRTWTDLPCGEKNPFICKSRLPH</sequence>
<name>SLA_BITAR</name>
<reference key="1">
    <citation type="journal article" date="1997" name="Biochem. Cell Biol.">
        <title>Complete amino acid sequence of bitiscetin, a novel von Willebrand factor modulator protein purified from snake venom of Bitis arietans.</title>
        <authorList>
            <person name="Matsui T."/>
            <person name="Hamako J."/>
            <person name="Suzuki M."/>
            <person name="Hayashi N."/>
            <person name="Ito M."/>
            <person name="Makita K."/>
            <person name="Fujimura Y."/>
            <person name="Ozeki Y."/>
            <person name="Titani K."/>
        </authorList>
    </citation>
    <scope>PROTEIN SEQUENCE</scope>
    <source>
        <tissue>Venom</tissue>
    </source>
</reference>
<reference key="2">
    <citation type="journal article" date="1996" name="Biochem. Biophys. Res. Commun.">
        <title>Purification and characterization of bitiscetin, a novel von Willebrand factor modulator protein from Bitis arietans snake venom.</title>
        <authorList>
            <person name="Hamako J."/>
            <person name="Matsui T."/>
            <person name="Suzuki M."/>
            <person name="Ito M."/>
            <person name="Makita K."/>
            <person name="Fujimura Y."/>
            <person name="Ozeki Y."/>
            <person name="Titani K."/>
        </authorList>
    </citation>
    <scope>PROTEIN SEQUENCE OF 1-20</scope>
    <scope>FUNCTION</scope>
    <source>
        <tissue>Venom</tissue>
    </source>
</reference>
<reference key="3">
    <citation type="journal article" date="2002" name="Biochemistry">
        <title>Binding site on human von Willebrand factor of bitiscetin, a snake venom-derived platelet aggregation inducer.</title>
        <authorList>
            <person name="Matsui T."/>
            <person name="Hamako J."/>
            <person name="Matsushita T."/>
            <person name="Nakayama T."/>
            <person name="Fujimura Y."/>
            <person name="Titani K."/>
        </authorList>
    </citation>
    <scope>FUNCTION</scope>
</reference>
<reference key="4">
    <citation type="journal article" date="2001" name="Biochemistry">
        <title>Crystal structure of bitiscetin, a von Willebrand factor-dependent platelet aggregation inducer.</title>
        <authorList>
            <person name="Hirotsu S."/>
            <person name="Mizuno H."/>
            <person name="Fukuda K."/>
            <person name="Qi M.C."/>
            <person name="Matsui T."/>
            <person name="Hamako J."/>
            <person name="Morita T."/>
            <person name="Titani K."/>
        </authorList>
    </citation>
    <scope>X-RAY CRYSTALLOGRAPHY (2.0 ANGSTROMS)</scope>
    <scope>SUBUNIT</scope>
    <scope>DISULFIDE BONDS</scope>
</reference>
<reference key="5">
    <citation type="journal article" date="2003" name="J. Biol. Chem.">
        <title>Crystal structure of von Willebrand factor A1 domain complexed with snake venom, bitiscetin: insight into glycoprotein Ibalpha binding mechanism induced by snake venom proteins.</title>
        <authorList>
            <person name="Maita N."/>
            <person name="Nishio K."/>
            <person name="Nishimoto E."/>
            <person name="Matsui T."/>
            <person name="Shikamoto Y."/>
            <person name="Morita T."/>
            <person name="Sadler J.E."/>
            <person name="Mizuno H."/>
        </authorList>
    </citation>
    <scope>X-RAY CRYSTALLOGRAPHY (2.85 ANGSTROMS)</scope>
    <scope>SUBUNIT</scope>
    <scope>DISULFIDE BONDS</scope>
</reference>
<organism>
    <name type="scientific">Bitis arietans</name>
    <name type="common">African puff adder</name>
    <dbReference type="NCBI Taxonomy" id="8692"/>
    <lineage>
        <taxon>Eukaryota</taxon>
        <taxon>Metazoa</taxon>
        <taxon>Chordata</taxon>
        <taxon>Craniata</taxon>
        <taxon>Vertebrata</taxon>
        <taxon>Euteleostomi</taxon>
        <taxon>Lepidosauria</taxon>
        <taxon>Squamata</taxon>
        <taxon>Bifurcata</taxon>
        <taxon>Unidentata</taxon>
        <taxon>Episquamata</taxon>
        <taxon>Toxicofera</taxon>
        <taxon>Serpentes</taxon>
        <taxon>Colubroidea</taxon>
        <taxon>Viperidae</taxon>
        <taxon>Viperinae</taxon>
        <taxon>Bitis</taxon>
    </lineage>
</organism>
<feature type="chain" id="PRO_0000355240" description="Snaclec bitiscetin subunit alpha">
    <location>
        <begin position="1"/>
        <end position="131"/>
    </location>
</feature>
<feature type="domain" description="C-type lectin" evidence="1">
    <location>
        <begin position="11"/>
        <end position="126"/>
    </location>
</feature>
<feature type="disulfide bond">
    <location>
        <begin position="4"/>
        <end position="15"/>
    </location>
</feature>
<feature type="disulfide bond">
    <location>
        <begin position="32"/>
        <end position="125"/>
    </location>
</feature>
<feature type="disulfide bond" description="Interchain (with C-77 in beta chain)">
    <location>
        <position position="79"/>
    </location>
</feature>
<feature type="disulfide bond">
    <location>
        <begin position="100"/>
        <end position="117"/>
    </location>
</feature>
<feature type="strand" evidence="7">
    <location>
        <begin position="8"/>
        <end position="11"/>
    </location>
</feature>
<feature type="strand" evidence="7">
    <location>
        <begin position="14"/>
        <end position="23"/>
    </location>
</feature>
<feature type="helix" evidence="7">
    <location>
        <begin position="25"/>
        <end position="34"/>
    </location>
</feature>
<feature type="strand" evidence="8">
    <location>
        <begin position="37"/>
        <end position="39"/>
    </location>
</feature>
<feature type="helix" evidence="7">
    <location>
        <begin position="45"/>
        <end position="58"/>
    </location>
</feature>
<feature type="strand" evidence="7">
    <location>
        <begin position="66"/>
        <end position="72"/>
    </location>
</feature>
<feature type="strand" evidence="7">
    <location>
        <begin position="75"/>
        <end position="79"/>
    </location>
</feature>
<feature type="strand" evidence="7">
    <location>
        <begin position="94"/>
        <end position="96"/>
    </location>
</feature>
<feature type="strand" evidence="7">
    <location>
        <begin position="100"/>
        <end position="103"/>
    </location>
</feature>
<feature type="helix" evidence="7">
    <location>
        <begin position="105"/>
        <end position="107"/>
    </location>
</feature>
<feature type="strand" evidence="7">
    <location>
        <begin position="110"/>
        <end position="115"/>
    </location>
</feature>
<feature type="strand" evidence="7">
    <location>
        <begin position="121"/>
        <end position="127"/>
    </location>
</feature>